<protein>
    <recommendedName>
        <fullName evidence="1">Protein ApaG</fullName>
    </recommendedName>
</protein>
<keyword id="KW-1185">Reference proteome</keyword>
<sequence length="130" mass="14285">MYRAVTRHIEVTVEPNFLPEKSSVADGRWFWSYTVVITNSGAETVQLRSRHWVITDGAGRQQEVRGEGVVGEQPVLAPGERFEYTSGVPLSTASGFMSGSYQMESASGEQFDIVVPAFSLDSPDGKRVLN</sequence>
<reference key="1">
    <citation type="journal article" date="2007" name="Science">
        <title>Legumes symbioses: absence of nod genes in photosynthetic bradyrhizobia.</title>
        <authorList>
            <person name="Giraud E."/>
            <person name="Moulin L."/>
            <person name="Vallenet D."/>
            <person name="Barbe V."/>
            <person name="Cytryn E."/>
            <person name="Avarre J.-C."/>
            <person name="Jaubert M."/>
            <person name="Simon D."/>
            <person name="Cartieaux F."/>
            <person name="Prin Y."/>
            <person name="Bena G."/>
            <person name="Hannibal L."/>
            <person name="Fardoux J."/>
            <person name="Kojadinovic M."/>
            <person name="Vuillet L."/>
            <person name="Lajus A."/>
            <person name="Cruveiller S."/>
            <person name="Rouy Z."/>
            <person name="Mangenot S."/>
            <person name="Segurens B."/>
            <person name="Dossat C."/>
            <person name="Franck W.L."/>
            <person name="Chang W.-S."/>
            <person name="Saunders E."/>
            <person name="Bruce D."/>
            <person name="Richardson P."/>
            <person name="Normand P."/>
            <person name="Dreyfus B."/>
            <person name="Pignol D."/>
            <person name="Stacey G."/>
            <person name="Emerich D."/>
            <person name="Vermeglio A."/>
            <person name="Medigue C."/>
            <person name="Sadowsky M."/>
        </authorList>
    </citation>
    <scope>NUCLEOTIDE SEQUENCE [LARGE SCALE GENOMIC DNA]</scope>
    <source>
        <strain>ORS 278</strain>
    </source>
</reference>
<evidence type="ECO:0000255" key="1">
    <source>
        <dbReference type="HAMAP-Rule" id="MF_00791"/>
    </source>
</evidence>
<organism>
    <name type="scientific">Bradyrhizobium sp. (strain ORS 278)</name>
    <dbReference type="NCBI Taxonomy" id="114615"/>
    <lineage>
        <taxon>Bacteria</taxon>
        <taxon>Pseudomonadati</taxon>
        <taxon>Pseudomonadota</taxon>
        <taxon>Alphaproteobacteria</taxon>
        <taxon>Hyphomicrobiales</taxon>
        <taxon>Nitrobacteraceae</taxon>
        <taxon>Bradyrhizobium</taxon>
    </lineage>
</organism>
<feature type="chain" id="PRO_1000083608" description="Protein ApaG">
    <location>
        <begin position="1"/>
        <end position="130"/>
    </location>
</feature>
<feature type="domain" description="ApaG" evidence="1">
    <location>
        <begin position="3"/>
        <end position="127"/>
    </location>
</feature>
<proteinExistence type="inferred from homology"/>
<dbReference type="EMBL" id="CU234118">
    <property type="protein sequence ID" value="CAL80372.1"/>
    <property type="molecule type" value="Genomic_DNA"/>
</dbReference>
<dbReference type="RefSeq" id="WP_012030238.1">
    <property type="nucleotide sequence ID" value="NC_009445.1"/>
</dbReference>
<dbReference type="SMR" id="A4Z2J6"/>
<dbReference type="STRING" id="114615.BRADO6774"/>
<dbReference type="KEGG" id="bra:BRADO6774"/>
<dbReference type="eggNOG" id="COG2967">
    <property type="taxonomic scope" value="Bacteria"/>
</dbReference>
<dbReference type="HOGENOM" id="CLU_128074_1_0_5"/>
<dbReference type="OrthoDB" id="9795226at2"/>
<dbReference type="Proteomes" id="UP000001994">
    <property type="component" value="Chromosome"/>
</dbReference>
<dbReference type="GO" id="GO:0070987">
    <property type="term" value="P:error-free translesion synthesis"/>
    <property type="evidence" value="ECO:0007669"/>
    <property type="project" value="TreeGrafter"/>
</dbReference>
<dbReference type="Gene3D" id="2.60.40.1470">
    <property type="entry name" value="ApaG domain"/>
    <property type="match status" value="1"/>
</dbReference>
<dbReference type="HAMAP" id="MF_00791">
    <property type="entry name" value="ApaG"/>
    <property type="match status" value="1"/>
</dbReference>
<dbReference type="InterPro" id="IPR007474">
    <property type="entry name" value="ApaG_domain"/>
</dbReference>
<dbReference type="InterPro" id="IPR036767">
    <property type="entry name" value="ApaG_sf"/>
</dbReference>
<dbReference type="InterPro" id="IPR023065">
    <property type="entry name" value="Uncharacterised_ApaG"/>
</dbReference>
<dbReference type="NCBIfam" id="NF003967">
    <property type="entry name" value="PRK05461.1"/>
    <property type="match status" value="1"/>
</dbReference>
<dbReference type="PANTHER" id="PTHR14289">
    <property type="entry name" value="F-BOX ONLY PROTEIN 3"/>
    <property type="match status" value="1"/>
</dbReference>
<dbReference type="PANTHER" id="PTHR14289:SF16">
    <property type="entry name" value="POLYMERASE DELTA-INTERACTING PROTEIN 2"/>
    <property type="match status" value="1"/>
</dbReference>
<dbReference type="Pfam" id="PF04379">
    <property type="entry name" value="DUF525"/>
    <property type="match status" value="1"/>
</dbReference>
<dbReference type="SUPFAM" id="SSF110069">
    <property type="entry name" value="ApaG-like"/>
    <property type="match status" value="1"/>
</dbReference>
<dbReference type="PROSITE" id="PS51087">
    <property type="entry name" value="APAG"/>
    <property type="match status" value="1"/>
</dbReference>
<accession>A4Z2J6</accession>
<name>APAG_BRASO</name>
<gene>
    <name evidence="1" type="primary">apaG</name>
    <name type="ordered locus">BRADO6774</name>
</gene>